<keyword id="KW-1015">Disulfide bond</keyword>
<keyword id="KW-0872">Ion channel impairing toxin</keyword>
<keyword id="KW-0528">Neurotoxin</keyword>
<keyword id="KW-0964">Secreted</keyword>
<keyword id="KW-0732">Signal</keyword>
<keyword id="KW-0800">Toxin</keyword>
<keyword id="KW-0738">Voltage-gated sodium channel impairing toxin</keyword>
<evidence type="ECO:0000255" key="1"/>
<evidence type="ECO:0000255" key="2">
    <source>
        <dbReference type="PROSITE-ProRule" id="PRU01210"/>
    </source>
</evidence>
<evidence type="ECO:0000303" key="3">
    <source>
    </source>
</evidence>
<evidence type="ECO:0000305" key="4"/>
<evidence type="ECO:0000305" key="5">
    <source>
    </source>
</evidence>
<evidence type="ECO:0000312" key="6">
    <source>
        <dbReference type="EMBL" id="QPD99028.1"/>
    </source>
</evidence>
<comment type="function">
    <text evidence="5">Putative sodium channel toxin.</text>
</comment>
<comment type="subcellular location">
    <subcellularLocation>
        <location evidence="5">Secreted</location>
    </subcellularLocation>
</comment>
<comment type="tissue specificity">
    <text evidence="5">Expressed by the venom gland.</text>
</comment>
<comment type="domain">
    <text evidence="4">Has the structural arrangement of an alpha-helix connected to antiparallel beta-sheets by disulfide bonds (CS-alpha/beta).</text>
</comment>
<comment type="similarity">
    <text evidence="4">Belongs to the long (4 C-C) scorpion toxin superfamily. Sodium channel inhibitor family.</text>
</comment>
<dbReference type="EMBL" id="MT081346">
    <property type="protein sequence ID" value="QPD99028.1"/>
    <property type="molecule type" value="mRNA"/>
</dbReference>
<dbReference type="SMR" id="A0A7S8RFI7"/>
<dbReference type="GO" id="GO:0005576">
    <property type="term" value="C:extracellular region"/>
    <property type="evidence" value="ECO:0007669"/>
    <property type="project" value="UniProtKB-SubCell"/>
</dbReference>
<dbReference type="GO" id="GO:0019871">
    <property type="term" value="F:sodium channel inhibitor activity"/>
    <property type="evidence" value="ECO:0007669"/>
    <property type="project" value="InterPro"/>
</dbReference>
<dbReference type="GO" id="GO:0090729">
    <property type="term" value="F:toxin activity"/>
    <property type="evidence" value="ECO:0007669"/>
    <property type="project" value="UniProtKB-KW"/>
</dbReference>
<dbReference type="CDD" id="cd23106">
    <property type="entry name" value="neurotoxins_LC_scorpion"/>
    <property type="match status" value="1"/>
</dbReference>
<dbReference type="Gene3D" id="3.30.30.10">
    <property type="entry name" value="Knottin, scorpion toxin-like"/>
    <property type="match status" value="1"/>
</dbReference>
<dbReference type="InterPro" id="IPR044062">
    <property type="entry name" value="LCN-type_CS_alpha_beta_dom"/>
</dbReference>
<dbReference type="InterPro" id="IPR036574">
    <property type="entry name" value="Scorpion_toxin-like_sf"/>
</dbReference>
<dbReference type="InterPro" id="IPR002061">
    <property type="entry name" value="Scorpion_toxinL/defensin"/>
</dbReference>
<dbReference type="Pfam" id="PF00537">
    <property type="entry name" value="Toxin_3"/>
    <property type="match status" value="1"/>
</dbReference>
<dbReference type="SUPFAM" id="SSF57095">
    <property type="entry name" value="Scorpion toxin-like"/>
    <property type="match status" value="1"/>
</dbReference>
<dbReference type="PROSITE" id="PS51863">
    <property type="entry name" value="LCN_CSAB"/>
    <property type="match status" value="1"/>
</dbReference>
<feature type="signal peptide" evidence="1">
    <location>
        <begin position="1"/>
        <end position="20"/>
    </location>
</feature>
<feature type="chain" id="PRO_5031461676" description="Putative sodium channel toxin Ts37">
    <location>
        <begin position="21"/>
        <end position="85"/>
    </location>
</feature>
<feature type="domain" description="LCN-type CS-alpha/beta" evidence="2">
    <location>
        <begin position="22"/>
        <end position="83"/>
    </location>
</feature>
<feature type="disulfide bond" evidence="2">
    <location>
        <begin position="32"/>
        <end position="82"/>
    </location>
</feature>
<feature type="disulfide bond" evidence="2">
    <location>
        <begin position="36"/>
        <end position="59"/>
    </location>
</feature>
<feature type="disulfide bond" evidence="2">
    <location>
        <begin position="45"/>
        <end position="64"/>
    </location>
</feature>
<feature type="disulfide bond" evidence="2">
    <location>
        <begin position="49"/>
        <end position="66"/>
    </location>
</feature>
<name>SCX37_TITSE</name>
<protein>
    <recommendedName>
        <fullName evidence="3">Putative sodium channel toxin Ts37</fullName>
    </recommendedName>
    <alternativeName>
        <fullName evidence="4">Tityustoxin-37</fullName>
    </alternativeName>
</protein>
<proteinExistence type="inferred from homology"/>
<sequence length="85" mass="9354">MAGEWACLLVSLVLLWGAAGSRDGFLLDRNFCRIKCSFLGSNSMCADRCTVLGASAGHCNNYACFCTDLRDRVKIWGDSVRCRKP</sequence>
<organism>
    <name type="scientific">Tityus serrulatus</name>
    <name type="common">Brazilian scorpion</name>
    <dbReference type="NCBI Taxonomy" id="6887"/>
    <lineage>
        <taxon>Eukaryota</taxon>
        <taxon>Metazoa</taxon>
        <taxon>Ecdysozoa</taxon>
        <taxon>Arthropoda</taxon>
        <taxon>Chelicerata</taxon>
        <taxon>Arachnida</taxon>
        <taxon>Scorpiones</taxon>
        <taxon>Buthida</taxon>
        <taxon>Buthoidea</taxon>
        <taxon>Buthidae</taxon>
        <taxon>Tityus</taxon>
    </lineage>
</organism>
<reference evidence="6" key="1">
    <citation type="journal article" date="2021" name="Toxicon">
        <title>Novel components of Tityus serrulatus venom: a transcriptomic approach.</title>
        <authorList>
            <person name="Kalapothakis Y."/>
            <person name="Miranda K."/>
            <person name="Pereira A.H."/>
            <person name="Witt A.S.A."/>
            <person name="Marani C."/>
            <person name="Martins A.P."/>
            <person name="Leal H.G."/>
            <person name="Campos-Junior E."/>
            <person name="Pimenta A.M.C."/>
            <person name="Borges A."/>
            <person name="Chavez-Olortegui C."/>
            <person name="Kalapothakis E."/>
        </authorList>
    </citation>
    <scope>NUCLEOTIDE SEQUENCE [MRNA]</scope>
    <source>
        <tissue>Telson</tissue>
    </source>
</reference>
<accession>A0A7S8RFI7</accession>